<name>MTSA_METMA</name>
<sequence>MVSEMTPTRRALAAVLGGRVDYVPPANPLAQTTTELMAICNASWPKAHFDSKMMADLAAASYEVCGIEAARPQFDISLEAEVLGCKLDWDKPDRPPVTGPAYTNPEDVTWPDKLEETGRIPVVLGAIDELRKRYDGMLPIIPLLTAPFTVAGHIAGVENMARWTKTDPEKAHAFIDAATDFVVAYGKLQAAYGAHILFLADPSASSSLISAETYREFVLPAHRRLAKEISCPQILHICGDSSKLLPYIKQSGIDCFSFDTVPVWYCRQVIGNDMSILGSLDVIDLMPNGTPEQVYNRTRECILQGTDIVGTACGVSYGTPLENLRAYVRACKETPIPRYDDVEDLIRQIGVGIGRNMKENVLGGMQE</sequence>
<protein>
    <recommendedName>
        <fullName>Methylated-thiol--coenzyme M methyltransferase</fullName>
        <ecNumber>2.1.1.251</ecNumber>
    </recommendedName>
    <alternativeName>
        <fullName>Methylthiol:coenzyme M methyltransferase 40 kDa subunit</fullName>
    </alternativeName>
</protein>
<keyword id="KW-0479">Metal-binding</keyword>
<keyword id="KW-0484">Methanogenesis</keyword>
<keyword id="KW-0489">Methyltransferase</keyword>
<keyword id="KW-0808">Transferase</keyword>
<keyword id="KW-0862">Zinc</keyword>
<organism>
    <name type="scientific">Methanosarcina mazei (strain ATCC BAA-159 / DSM 3647 / Goe1 / Go1 / JCM 11833 / OCM 88)</name>
    <name type="common">Methanosarcina frisia</name>
    <dbReference type="NCBI Taxonomy" id="192952"/>
    <lineage>
        <taxon>Archaea</taxon>
        <taxon>Methanobacteriati</taxon>
        <taxon>Methanobacteriota</taxon>
        <taxon>Stenosarchaea group</taxon>
        <taxon>Methanomicrobia</taxon>
        <taxon>Methanosarcinales</taxon>
        <taxon>Methanosarcinaceae</taxon>
        <taxon>Methanosarcina</taxon>
    </lineage>
</organism>
<dbReference type="EC" id="2.1.1.251"/>
<dbReference type="EMBL" id="AE008384">
    <property type="protein sequence ID" value="AAM32123.1"/>
    <property type="molecule type" value="Genomic_DNA"/>
</dbReference>
<dbReference type="RefSeq" id="WP_011034351.1">
    <property type="nucleotide sequence ID" value="NC_003901.1"/>
</dbReference>
<dbReference type="SMR" id="Q8PUA8"/>
<dbReference type="KEGG" id="mma:MM_2427"/>
<dbReference type="PATRIC" id="fig|192952.21.peg.2778"/>
<dbReference type="eggNOG" id="arCOG03325">
    <property type="taxonomic scope" value="Archaea"/>
</dbReference>
<dbReference type="HOGENOM" id="CLU_040933_2_1_2"/>
<dbReference type="Proteomes" id="UP000000595">
    <property type="component" value="Chromosome"/>
</dbReference>
<dbReference type="GO" id="GO:0046872">
    <property type="term" value="F:metal ion binding"/>
    <property type="evidence" value="ECO:0007669"/>
    <property type="project" value="UniProtKB-KW"/>
</dbReference>
<dbReference type="GO" id="GO:0044683">
    <property type="term" value="F:methylthiol:coenzyme M methyltransferase activity"/>
    <property type="evidence" value="ECO:0007669"/>
    <property type="project" value="UniProtKB-EC"/>
</dbReference>
<dbReference type="GO" id="GO:0004853">
    <property type="term" value="F:uroporphyrinogen decarboxylase activity"/>
    <property type="evidence" value="ECO:0007669"/>
    <property type="project" value="InterPro"/>
</dbReference>
<dbReference type="GO" id="GO:0015948">
    <property type="term" value="P:methanogenesis"/>
    <property type="evidence" value="ECO:0007669"/>
    <property type="project" value="UniProtKB-KW"/>
</dbReference>
<dbReference type="GO" id="GO:0032259">
    <property type="term" value="P:methylation"/>
    <property type="evidence" value="ECO:0007669"/>
    <property type="project" value="UniProtKB-KW"/>
</dbReference>
<dbReference type="GO" id="GO:0006730">
    <property type="term" value="P:one-carbon metabolic process"/>
    <property type="evidence" value="ECO:0007669"/>
    <property type="project" value="InterPro"/>
</dbReference>
<dbReference type="GO" id="GO:0006779">
    <property type="term" value="P:porphyrin-containing compound biosynthetic process"/>
    <property type="evidence" value="ECO:0007669"/>
    <property type="project" value="InterPro"/>
</dbReference>
<dbReference type="CDD" id="cd03307">
    <property type="entry name" value="Mta_CmuA_like"/>
    <property type="match status" value="1"/>
</dbReference>
<dbReference type="Gene3D" id="3.20.20.210">
    <property type="match status" value="1"/>
</dbReference>
<dbReference type="InterPro" id="IPR052024">
    <property type="entry name" value="Methanogen_methyltrans"/>
</dbReference>
<dbReference type="InterPro" id="IPR006360">
    <property type="entry name" value="Mtase_MtaA_CmuA"/>
</dbReference>
<dbReference type="InterPro" id="IPR038071">
    <property type="entry name" value="UROD/MetE-like_sf"/>
</dbReference>
<dbReference type="InterPro" id="IPR000257">
    <property type="entry name" value="Uroporphyrinogen_deCOase"/>
</dbReference>
<dbReference type="NCBIfam" id="TIGR01463">
    <property type="entry name" value="mtaA_cmuA"/>
    <property type="match status" value="1"/>
</dbReference>
<dbReference type="NCBIfam" id="NF004889">
    <property type="entry name" value="PRK06252.1"/>
    <property type="match status" value="1"/>
</dbReference>
<dbReference type="PANTHER" id="PTHR47099">
    <property type="entry name" value="METHYLCOBAMIDE:COM METHYLTRANSFERASE MTBA"/>
    <property type="match status" value="1"/>
</dbReference>
<dbReference type="PANTHER" id="PTHR47099:SF1">
    <property type="entry name" value="METHYLCOBAMIDE:COM METHYLTRANSFERASE MTBA"/>
    <property type="match status" value="1"/>
</dbReference>
<dbReference type="Pfam" id="PF01208">
    <property type="entry name" value="URO-D"/>
    <property type="match status" value="1"/>
</dbReference>
<dbReference type="SUPFAM" id="SSF51726">
    <property type="entry name" value="UROD/MetE-like"/>
    <property type="match status" value="1"/>
</dbReference>
<gene>
    <name type="primary">mtsA</name>
    <name type="ordered locus">MM_2427</name>
</gene>
<reference key="1">
    <citation type="journal article" date="2002" name="J. Mol. Microbiol. Biotechnol.">
        <title>The genome of Methanosarcina mazei: evidence for lateral gene transfer between Bacteria and Archaea.</title>
        <authorList>
            <person name="Deppenmeier U."/>
            <person name="Johann A."/>
            <person name="Hartsch T."/>
            <person name="Merkl R."/>
            <person name="Schmitz R.A."/>
            <person name="Martinez-Arias R."/>
            <person name="Henne A."/>
            <person name="Wiezer A."/>
            <person name="Baeumer S."/>
            <person name="Jacobi C."/>
            <person name="Brueggemann H."/>
            <person name="Lienard T."/>
            <person name="Christmann A."/>
            <person name="Boemecke M."/>
            <person name="Steckel S."/>
            <person name="Bhattacharyya A."/>
            <person name="Lykidis A."/>
            <person name="Overbeek R."/>
            <person name="Klenk H.-P."/>
            <person name="Gunsalus R.P."/>
            <person name="Fritz H.-J."/>
            <person name="Gottschalk G."/>
        </authorList>
    </citation>
    <scope>NUCLEOTIDE SEQUENCE [LARGE SCALE GENOMIC DNA]</scope>
    <source>
        <strain>ATCC BAA-159 / DSM 3647 / Goe1 / Go1 / JCM 11833 / OCM 88</strain>
    </source>
</reference>
<feature type="chain" id="PRO_0000419107" description="Methylated-thiol--coenzyme M methyltransferase">
    <location>
        <begin position="1"/>
        <end position="367"/>
    </location>
</feature>
<feature type="binding site" evidence="1">
    <location>
        <position position="236"/>
    </location>
    <ligand>
        <name>Zn(2+)</name>
        <dbReference type="ChEBI" id="CHEBI:29105"/>
    </ligand>
</feature>
<feature type="binding site" evidence="1">
    <location>
        <position position="238"/>
    </location>
    <ligand>
        <name>Zn(2+)</name>
        <dbReference type="ChEBI" id="CHEBI:29105"/>
    </ligand>
</feature>
<feature type="binding site" evidence="2">
    <location>
        <position position="313"/>
    </location>
    <ligand>
        <name>Zn(2+)</name>
        <dbReference type="ChEBI" id="CHEBI:29105"/>
    </ligand>
</feature>
<proteinExistence type="inferred from homology"/>
<comment type="function">
    <text evidence="1">Methyltransferase involved in methanogenesis from methylated-thiols. Catalyzes two successive steps: mediates the transfer of a methyl group from the substrate to the cobalt cofactor of a methylated-thiol-specific corrinoid protein (MtsB), and the subsequent transfer of the methyl group from the corrinoid protein to coenzyme M (By similarity).</text>
</comment>
<comment type="catalytic activity">
    <reaction>
        <text>methanethiol + coenzyme M = methyl-coenzyme M + hydrogen sulfide + H(+)</text>
        <dbReference type="Rhea" id="RHEA:32667"/>
        <dbReference type="ChEBI" id="CHEBI:15378"/>
        <dbReference type="ChEBI" id="CHEBI:16007"/>
        <dbReference type="ChEBI" id="CHEBI:29919"/>
        <dbReference type="ChEBI" id="CHEBI:58286"/>
        <dbReference type="ChEBI" id="CHEBI:58319"/>
        <dbReference type="EC" id="2.1.1.251"/>
    </reaction>
</comment>
<comment type="cofactor">
    <cofactor evidence="1">
        <name>Zn(2+)</name>
        <dbReference type="ChEBI" id="CHEBI:29105"/>
    </cofactor>
    <text evidence="1">Binds 1 zinc ion per subunit.</text>
</comment>
<comment type="subunit">
    <text evidence="1">Homodimer.</text>
</comment>
<comment type="similarity">
    <text evidence="3">Belongs to the uroporphyrinogen decarboxylase family.</text>
</comment>
<accession>Q8PUA8</accession>
<evidence type="ECO:0000250" key="1"/>
<evidence type="ECO:0000255" key="2"/>
<evidence type="ECO:0000305" key="3"/>